<organism>
    <name type="scientific">Mycosarcoma maydis</name>
    <name type="common">Corn smut fungus</name>
    <name type="synonym">Ustilago maydis</name>
    <dbReference type="NCBI Taxonomy" id="5270"/>
    <lineage>
        <taxon>Eukaryota</taxon>
        <taxon>Fungi</taxon>
        <taxon>Dikarya</taxon>
        <taxon>Basidiomycota</taxon>
        <taxon>Ustilaginomycotina</taxon>
        <taxon>Ustilaginomycetes</taxon>
        <taxon>Ustilaginales</taxon>
        <taxon>Ustilaginaceae</taxon>
        <taxon>Mycosarcoma</taxon>
    </lineage>
</organism>
<dbReference type="EMBL" id="CM003141">
    <property type="protein sequence ID" value="KIS71537.1"/>
    <property type="molecule type" value="Genomic_DNA"/>
</dbReference>
<dbReference type="EMBL" id="BK004083">
    <property type="protein sequence ID" value="DAA04935.1"/>
    <property type="molecule type" value="Genomic_DNA"/>
</dbReference>
<dbReference type="RefSeq" id="XP_011387441.1">
    <property type="nucleotide sequence ID" value="XM_011389139.1"/>
</dbReference>
<dbReference type="STRING" id="237631.A1A654"/>
<dbReference type="GlyCosmos" id="A1A654">
    <property type="glycosylation" value="3 sites, No reported glycans"/>
</dbReference>
<dbReference type="EnsemblFungi" id="KIS71537">
    <property type="protein sequence ID" value="KIS71537"/>
    <property type="gene ID" value="UMAG_11339"/>
</dbReference>
<dbReference type="GeneID" id="23567235"/>
<dbReference type="KEGG" id="uma:UMAG_11339"/>
<dbReference type="VEuPathDB" id="FungiDB:UMAG_11339"/>
<dbReference type="eggNOG" id="KOG0254">
    <property type="taxonomic scope" value="Eukaryota"/>
</dbReference>
<dbReference type="eggNOG" id="KOG2495">
    <property type="taxonomic scope" value="Eukaryota"/>
</dbReference>
<dbReference type="InParanoid" id="A1A654"/>
<dbReference type="OrthoDB" id="2241241at2759"/>
<dbReference type="Proteomes" id="UP000000561">
    <property type="component" value="Chromosome 2"/>
</dbReference>
<dbReference type="GO" id="GO:0005886">
    <property type="term" value="C:plasma membrane"/>
    <property type="evidence" value="ECO:0000318"/>
    <property type="project" value="GO_Central"/>
</dbReference>
<dbReference type="GO" id="GO:0022857">
    <property type="term" value="F:transmembrane transporter activity"/>
    <property type="evidence" value="ECO:0000318"/>
    <property type="project" value="GO_Central"/>
</dbReference>
<dbReference type="GO" id="GO:0055085">
    <property type="term" value="P:transmembrane transport"/>
    <property type="evidence" value="ECO:0000318"/>
    <property type="project" value="GO_Central"/>
</dbReference>
<dbReference type="FunFam" id="1.20.1250.20:FF:001683">
    <property type="entry name" value="Siderophore iron transporter 3"/>
    <property type="match status" value="1"/>
</dbReference>
<dbReference type="Gene3D" id="1.20.1250.20">
    <property type="entry name" value="MFS general substrate transporter like domains"/>
    <property type="match status" value="1"/>
</dbReference>
<dbReference type="InterPro" id="IPR011701">
    <property type="entry name" value="MFS"/>
</dbReference>
<dbReference type="InterPro" id="IPR020846">
    <property type="entry name" value="MFS_dom"/>
</dbReference>
<dbReference type="InterPro" id="IPR036259">
    <property type="entry name" value="MFS_trans_sf"/>
</dbReference>
<dbReference type="PANTHER" id="PTHR23501:SF58">
    <property type="entry name" value="LOW AFFINITY HEME TRANSPORTER STR3"/>
    <property type="match status" value="1"/>
</dbReference>
<dbReference type="PANTHER" id="PTHR23501">
    <property type="entry name" value="MAJOR FACILITATOR SUPERFAMILY"/>
    <property type="match status" value="1"/>
</dbReference>
<dbReference type="Pfam" id="PF07690">
    <property type="entry name" value="MFS_1"/>
    <property type="match status" value="1"/>
</dbReference>
<dbReference type="SUPFAM" id="SSF103473">
    <property type="entry name" value="MFS general substrate transporter"/>
    <property type="match status" value="1"/>
</dbReference>
<dbReference type="PROSITE" id="PS50850">
    <property type="entry name" value="MFS"/>
    <property type="match status" value="1"/>
</dbReference>
<keyword id="KW-0325">Glycoprotein</keyword>
<keyword id="KW-0472">Membrane</keyword>
<keyword id="KW-1185">Reference proteome</keyword>
<keyword id="KW-0812">Transmembrane</keyword>
<keyword id="KW-1133">Transmembrane helix</keyword>
<keyword id="KW-0843">Virulence</keyword>
<sequence>MSNQAQDQPERRDSSSENSSPFKDDEVAADQSVSAHGNTSLNKKDRVSAVRDADASSAREGQQPGVTRIEALYRIFPRNSPIVYTVYASLAAVTICFALDQSTTAAYQLYATRTLGSHAKLFGVIATVEAILNAVSKPFIAKICDIFSRQTAYFLVAVFYTIGFVVVASAQTPAAFAVGRIITEVGQAGFDLVTDIVVADLSPLEWRGVVTALTSSPFIVLPWVGNLIQARLNTGRPEGWRWGYGMFAIMAPVCVAPIILVLMYVDRKAQKAGELSFASSRLETRRAQEQGTVKVQRDSLRDRFANLVQLCKEMDLVGLFLLALSFSLLLVPFSIYKDADKQWRNPSIIAMFVCGGVILGMFLAWEILLASHPVMNKRVWYNRTFLLAVTIDIFYFMGGNARSTYYGSFVLVGTNLSTANWGYVVNALATCALSVFGLAAGFYLRIFHRYKFLQIGGLVIRIVAMGLYLYGRNGNLTTMVVAWSQILNSLGGACSVVGTRVASQASVPHQDLASIISQLALWTRLGGAIGSAIAAGIWTGTLPDYLAATNLTPAQQSRAYNSPTTIKTSYPWNTPLRNQINQAFSKTMKPIFIVALVLAFIPLFAGLLMPNYYLGKTQNAVDGTDNSGRVIESAEDNPNAEINRKNVKYAKGTRLSWLW</sequence>
<evidence type="ECO:0000255" key="1"/>
<evidence type="ECO:0000255" key="2">
    <source>
        <dbReference type="PROSITE-ProRule" id="PRU00498"/>
    </source>
</evidence>
<evidence type="ECO:0000256" key="3">
    <source>
        <dbReference type="SAM" id="MobiDB-lite"/>
    </source>
</evidence>
<evidence type="ECO:0000269" key="4">
    <source>
    </source>
</evidence>
<evidence type="ECO:0000269" key="5">
    <source ref="4"/>
</evidence>
<evidence type="ECO:0000303" key="6">
    <source>
    </source>
</evidence>
<evidence type="ECO:0000305" key="7"/>
<gene>
    <name evidence="6" type="primary">fer7</name>
    <name type="ORF">UMAG_11339</name>
</gene>
<comment type="function">
    <text evidence="4 5">Siderophore transporter; part of the gene cluster that mediates the biosynthesis of siderophore ferrichrome A which is contributing to organismal virulence (PubMed:17138696, Ref.4).</text>
</comment>
<comment type="subcellular location">
    <subcellularLocation>
        <location evidence="7">Membrane</location>
        <topology evidence="7">Multi-pass membrane protein</topology>
    </subcellularLocation>
</comment>
<comment type="induction">
    <text evidence="4">Expression regulated by iron through the urbs1 transcription factor (PubMed:17138696).</text>
</comment>
<comment type="similarity">
    <text evidence="7">Belongs to the major facilitator superfamily.</text>
</comment>
<protein>
    <recommendedName>
        <fullName evidence="6">Siderophore transporter fer7</fullName>
    </recommendedName>
    <alternativeName>
        <fullName evidence="6">Fe-regulated protein 7</fullName>
    </alternativeName>
</protein>
<accession>A1A654</accession>
<proteinExistence type="evidence at transcript level"/>
<name>FER7_MYCMD</name>
<feature type="chain" id="PRO_0000441963" description="Siderophore transporter fer7">
    <location>
        <begin position="1"/>
        <end position="659"/>
    </location>
</feature>
<feature type="transmembrane region" description="Helical" evidence="1">
    <location>
        <begin position="79"/>
        <end position="99"/>
    </location>
</feature>
<feature type="transmembrane region" description="Helical" evidence="1">
    <location>
        <begin position="121"/>
        <end position="141"/>
    </location>
</feature>
<feature type="transmembrane region" description="Helical" evidence="1">
    <location>
        <begin position="150"/>
        <end position="170"/>
    </location>
</feature>
<feature type="transmembrane region" description="Helical" evidence="1">
    <location>
        <begin position="208"/>
        <end position="228"/>
    </location>
</feature>
<feature type="transmembrane region" description="Helical" evidence="1">
    <location>
        <begin position="245"/>
        <end position="265"/>
    </location>
</feature>
<feature type="transmembrane region" description="Helical" evidence="1">
    <location>
        <begin position="316"/>
        <end position="336"/>
    </location>
</feature>
<feature type="transmembrane region" description="Helical" evidence="1">
    <location>
        <begin position="348"/>
        <end position="368"/>
    </location>
</feature>
<feature type="transmembrane region" description="Helical" evidence="1">
    <location>
        <begin position="379"/>
        <end position="399"/>
    </location>
</feature>
<feature type="transmembrane region" description="Helical" evidence="1">
    <location>
        <begin position="424"/>
        <end position="444"/>
    </location>
</feature>
<feature type="transmembrane region" description="Helical" evidence="1">
    <location>
        <begin position="451"/>
        <end position="471"/>
    </location>
</feature>
<feature type="transmembrane region" description="Helical" evidence="1">
    <location>
        <begin position="478"/>
        <end position="498"/>
    </location>
</feature>
<feature type="transmembrane region" description="Helical" evidence="1">
    <location>
        <begin position="528"/>
        <end position="548"/>
    </location>
</feature>
<feature type="transmembrane region" description="Helical" evidence="1">
    <location>
        <begin position="590"/>
        <end position="610"/>
    </location>
</feature>
<feature type="region of interest" description="Disordered" evidence="3">
    <location>
        <begin position="1"/>
        <end position="62"/>
    </location>
</feature>
<feature type="compositionally biased region" description="Polar residues" evidence="3">
    <location>
        <begin position="31"/>
        <end position="41"/>
    </location>
</feature>
<feature type="compositionally biased region" description="Basic and acidic residues" evidence="3">
    <location>
        <begin position="42"/>
        <end position="54"/>
    </location>
</feature>
<feature type="glycosylation site" description="N-linked (GlcNAc...) asparagine" evidence="2">
    <location>
        <position position="38"/>
    </location>
</feature>
<feature type="glycosylation site" description="N-linked (GlcNAc...) asparagine" evidence="2">
    <location>
        <position position="415"/>
    </location>
</feature>
<feature type="glycosylation site" description="N-linked (GlcNAc...) asparagine" evidence="2">
    <location>
        <position position="475"/>
    </location>
</feature>
<reference key="1">
    <citation type="journal article" date="2006" name="Nature">
        <title>Insights from the genome of the biotrophic fungal plant pathogen Ustilago maydis.</title>
        <authorList>
            <person name="Kaemper J."/>
            <person name="Kahmann R."/>
            <person name="Boelker M."/>
            <person name="Ma L.-J."/>
            <person name="Brefort T."/>
            <person name="Saville B.J."/>
            <person name="Banuett F."/>
            <person name="Kronstad J.W."/>
            <person name="Gold S.E."/>
            <person name="Mueller O."/>
            <person name="Perlin M.H."/>
            <person name="Woesten H.A.B."/>
            <person name="de Vries R."/>
            <person name="Ruiz-Herrera J."/>
            <person name="Reynaga-Pena C.G."/>
            <person name="Snetselaar K."/>
            <person name="McCann M."/>
            <person name="Perez-Martin J."/>
            <person name="Feldbruegge M."/>
            <person name="Basse C.W."/>
            <person name="Steinberg G."/>
            <person name="Ibeas J.I."/>
            <person name="Holloman W."/>
            <person name="Guzman P."/>
            <person name="Farman M.L."/>
            <person name="Stajich J.E."/>
            <person name="Sentandreu R."/>
            <person name="Gonzalez-Prieto J.M."/>
            <person name="Kennell J.C."/>
            <person name="Molina L."/>
            <person name="Schirawski J."/>
            <person name="Mendoza-Mendoza A."/>
            <person name="Greilinger D."/>
            <person name="Muench K."/>
            <person name="Roessel N."/>
            <person name="Scherer M."/>
            <person name="Vranes M."/>
            <person name="Ladendorf O."/>
            <person name="Vincon V."/>
            <person name="Fuchs U."/>
            <person name="Sandrock B."/>
            <person name="Meng S."/>
            <person name="Ho E.C.H."/>
            <person name="Cahill M.J."/>
            <person name="Boyce K.J."/>
            <person name="Klose J."/>
            <person name="Klosterman S.J."/>
            <person name="Deelstra H.J."/>
            <person name="Ortiz-Castellanos L."/>
            <person name="Li W."/>
            <person name="Sanchez-Alonso P."/>
            <person name="Schreier P.H."/>
            <person name="Haeuser-Hahn I."/>
            <person name="Vaupel M."/>
            <person name="Koopmann E."/>
            <person name="Friedrich G."/>
            <person name="Voss H."/>
            <person name="Schlueter T."/>
            <person name="Margolis J."/>
            <person name="Platt D."/>
            <person name="Swimmer C."/>
            <person name="Gnirke A."/>
            <person name="Chen F."/>
            <person name="Vysotskaia V."/>
            <person name="Mannhaupt G."/>
            <person name="Gueldener U."/>
            <person name="Muensterkoetter M."/>
            <person name="Haase D."/>
            <person name="Oesterheld M."/>
            <person name="Mewes H.-W."/>
            <person name="Mauceli E.W."/>
            <person name="DeCaprio D."/>
            <person name="Wade C.M."/>
            <person name="Butler J."/>
            <person name="Young S.K."/>
            <person name="Jaffe D.B."/>
            <person name="Calvo S.E."/>
            <person name="Nusbaum C."/>
            <person name="Galagan J.E."/>
            <person name="Birren B.W."/>
        </authorList>
    </citation>
    <scope>NUCLEOTIDE SEQUENCE [LARGE SCALE GENOMIC DNA]</scope>
    <source>
        <strain>DSM 14603 / FGSC 9021 / UM521</strain>
    </source>
</reference>
<reference key="2">
    <citation type="submission" date="2014-09" db="EMBL/GenBank/DDBJ databases">
        <authorList>
            <person name="Gueldener U."/>
            <person name="Muensterkoetter M."/>
            <person name="Walter M.C."/>
            <person name="Mannhaupt G."/>
            <person name="Kahmann R."/>
        </authorList>
    </citation>
    <scope>GENOME REANNOTATION</scope>
    <source>
        <strain>DSM 14603 / FGSC 9021 / UM521</strain>
    </source>
</reference>
<reference key="3">
    <citation type="journal article" date="2006" name="Plant Cell">
        <title>A ferroxidation/permeation iron uptake system is required for virulence in Ustilago maydis.</title>
        <authorList>
            <person name="Eichhorn H."/>
            <person name="Lessing F."/>
            <person name="Winterberg B."/>
            <person name="Schirawski J."/>
            <person name="Kamper J."/>
            <person name="Muller P."/>
            <person name="Kahmann R."/>
        </authorList>
    </citation>
    <scope>INDUCTION</scope>
    <scope>FUNCTION</scope>
    <source>
        <strain>DSM 14603 / FGSC 9021 / UM521</strain>
    </source>
</reference>
<reference key="4">
    <citation type="journal article" date="2010" name="Mol. Microbiol.">
        <title>Elucidation of the complete ferrichrome A biosynthetic pathway in Ustilago maydis.</title>
        <authorList>
            <person name="Winterberg B."/>
            <person name="Uhlmann S."/>
            <person name="Linne U."/>
            <person name="Lessing F."/>
            <person name="Marahiel M.A."/>
            <person name="Eichhorn H."/>
            <person name="Kahmann R."/>
            <person name="Schirawski J."/>
        </authorList>
    </citation>
    <scope>FUNCTION</scope>
    <source>
        <strain>DSM 14603 / FGSC 9021 / UM521</strain>
    </source>
</reference>